<reference key="1">
    <citation type="journal article" date="2009" name="Peptides">
        <title>Identification of novel I-superfamily conopeptides from several clades of Conus species found in the South China Sea.</title>
        <authorList>
            <person name="Liu Z."/>
            <person name="Xu N."/>
            <person name="Hu J."/>
            <person name="Zhao C."/>
            <person name="Yu Z."/>
            <person name="Dai Q."/>
        </authorList>
    </citation>
    <scope>NUCLEOTIDE SEQUENCE [MRNA]</scope>
    <source>
        <tissue>Venom duct</tissue>
    </source>
</reference>
<sequence length="84" mass="9627">MMFRLTSVSCFLLVIACLNLFQVVLTSRCFPPGIYCTPYLPCCWGICCGTCRNDNSSLTFLQFCLPFFFFLRPSHPLFLLLPAR</sequence>
<keyword id="KW-1015">Disulfide bond</keyword>
<keyword id="KW-0872">Ion channel impairing toxin</keyword>
<keyword id="KW-0528">Neurotoxin</keyword>
<keyword id="KW-0632">Potassium channel impairing toxin</keyword>
<keyword id="KW-0964">Secreted</keyword>
<keyword id="KW-0732">Signal</keyword>
<keyword id="KW-0800">Toxin</keyword>
<keyword id="KW-1220">Voltage-gated potassium channel impairing toxin</keyword>
<comment type="function">
    <text evidence="1">Inhibits the vertebrate voltage-gated potassium channels Kv1.1/KCNA1 and Kv1.3/KCNA3.</text>
</comment>
<comment type="subcellular location">
    <subcellularLocation>
        <location evidence="5">Secreted</location>
    </subcellularLocation>
</comment>
<comment type="tissue specificity">
    <text evidence="5">Expressed by the venom duct.</text>
</comment>
<comment type="domain">
    <text evidence="4">The cysteine framework is XI (C-C-CC-CC-C-C).</text>
</comment>
<comment type="similarity">
    <text evidence="4">Belongs to the conotoxin I2 superfamily.</text>
</comment>
<organism>
    <name type="scientific">Conus imperialis</name>
    <name type="common">Imperial cone</name>
    <dbReference type="NCBI Taxonomy" id="35631"/>
    <lineage>
        <taxon>Eukaryota</taxon>
        <taxon>Metazoa</taxon>
        <taxon>Spiralia</taxon>
        <taxon>Lophotrochozoa</taxon>
        <taxon>Mollusca</taxon>
        <taxon>Gastropoda</taxon>
        <taxon>Caenogastropoda</taxon>
        <taxon>Neogastropoda</taxon>
        <taxon>Conoidea</taxon>
        <taxon>Conidae</taxon>
        <taxon>Conus</taxon>
        <taxon>Stephanoconus</taxon>
    </lineage>
</organism>
<name>I2B3_CONIM</name>
<feature type="signal peptide" evidence="1">
    <location>
        <begin position="1"/>
        <end position="26"/>
    </location>
</feature>
<feature type="peptide" id="PRO_0000392055" description="Kappa-conotoxin-like Im11.3">
    <location>
        <begin position="27"/>
        <end position="70"/>
    </location>
</feature>
<feature type="propeptide" id="PRO_0000392056" evidence="1">
    <location>
        <begin position="71"/>
        <end position="84"/>
    </location>
</feature>
<feature type="disulfide bond" evidence="2">
    <location>
        <begin position="29"/>
        <end position="43"/>
    </location>
</feature>
<feature type="disulfide bond" evidence="2">
    <location>
        <begin position="36"/>
        <end position="48"/>
    </location>
</feature>
<feature type="disulfide bond" evidence="2">
    <location>
        <begin position="42"/>
        <end position="51"/>
    </location>
</feature>
<feature type="disulfide bond" evidence="2">
    <location>
        <begin position="47"/>
        <end position="64"/>
    </location>
</feature>
<protein>
    <recommendedName>
        <fullName evidence="3">Kappa-conotoxin-like Im11.3</fullName>
    </recommendedName>
</protein>
<dbReference type="EMBL" id="GQ184580">
    <property type="protein sequence ID" value="ACU30737.2"/>
    <property type="molecule type" value="mRNA"/>
</dbReference>
<dbReference type="GO" id="GO:0005576">
    <property type="term" value="C:extracellular region"/>
    <property type="evidence" value="ECO:0007669"/>
    <property type="project" value="UniProtKB-SubCell"/>
</dbReference>
<dbReference type="GO" id="GO:0015459">
    <property type="term" value="F:potassium channel regulator activity"/>
    <property type="evidence" value="ECO:0007669"/>
    <property type="project" value="UniProtKB-KW"/>
</dbReference>
<dbReference type="GO" id="GO:0090729">
    <property type="term" value="F:toxin activity"/>
    <property type="evidence" value="ECO:0007669"/>
    <property type="project" value="UniProtKB-KW"/>
</dbReference>
<evidence type="ECO:0000250" key="1"/>
<evidence type="ECO:0000250" key="2">
    <source>
        <dbReference type="UniProtKB" id="Q7Z094"/>
    </source>
</evidence>
<evidence type="ECO:0000303" key="3">
    <source>
    </source>
</evidence>
<evidence type="ECO:0000305" key="4"/>
<evidence type="ECO:0000305" key="5">
    <source>
    </source>
</evidence>
<proteinExistence type="inferred from homology"/>
<accession>C7DQY0</accession>